<keyword id="KW-0067">ATP-binding</keyword>
<keyword id="KW-0460">Magnesium</keyword>
<keyword id="KW-0547">Nucleotide-binding</keyword>
<keyword id="KW-0808">Transferase</keyword>
<keyword id="KW-0819">tRNA processing</keyword>
<organism>
    <name type="scientific">Streptococcus equi subsp. zooepidemicus (strain H70)</name>
    <dbReference type="NCBI Taxonomy" id="553483"/>
    <lineage>
        <taxon>Bacteria</taxon>
        <taxon>Bacillati</taxon>
        <taxon>Bacillota</taxon>
        <taxon>Bacilli</taxon>
        <taxon>Lactobacillales</taxon>
        <taxon>Streptococcaceae</taxon>
        <taxon>Streptococcus</taxon>
    </lineage>
</organism>
<proteinExistence type="inferred from homology"/>
<dbReference type="EC" id="2.5.1.75" evidence="1"/>
<dbReference type="EMBL" id="FM204884">
    <property type="protein sequence ID" value="CAW98825.1"/>
    <property type="molecule type" value="Genomic_DNA"/>
</dbReference>
<dbReference type="SMR" id="C0MDJ6"/>
<dbReference type="KEGG" id="seq:SZO_07130"/>
<dbReference type="eggNOG" id="COG0324">
    <property type="taxonomic scope" value="Bacteria"/>
</dbReference>
<dbReference type="HOGENOM" id="CLU_032616_0_1_9"/>
<dbReference type="Proteomes" id="UP000001368">
    <property type="component" value="Chromosome"/>
</dbReference>
<dbReference type="GO" id="GO:0005524">
    <property type="term" value="F:ATP binding"/>
    <property type="evidence" value="ECO:0007669"/>
    <property type="project" value="UniProtKB-UniRule"/>
</dbReference>
<dbReference type="GO" id="GO:0052381">
    <property type="term" value="F:tRNA dimethylallyltransferase activity"/>
    <property type="evidence" value="ECO:0007669"/>
    <property type="project" value="UniProtKB-UniRule"/>
</dbReference>
<dbReference type="GO" id="GO:0006400">
    <property type="term" value="P:tRNA modification"/>
    <property type="evidence" value="ECO:0007669"/>
    <property type="project" value="TreeGrafter"/>
</dbReference>
<dbReference type="Gene3D" id="3.40.50.300">
    <property type="entry name" value="P-loop containing nucleotide triphosphate hydrolases"/>
    <property type="match status" value="1"/>
</dbReference>
<dbReference type="HAMAP" id="MF_00185">
    <property type="entry name" value="IPP_trans"/>
    <property type="match status" value="1"/>
</dbReference>
<dbReference type="InterPro" id="IPR039657">
    <property type="entry name" value="Dimethylallyltransferase"/>
</dbReference>
<dbReference type="InterPro" id="IPR018022">
    <property type="entry name" value="IPT"/>
</dbReference>
<dbReference type="InterPro" id="IPR027417">
    <property type="entry name" value="P-loop_NTPase"/>
</dbReference>
<dbReference type="NCBIfam" id="TIGR00174">
    <property type="entry name" value="miaA"/>
    <property type="match status" value="1"/>
</dbReference>
<dbReference type="PANTHER" id="PTHR11088">
    <property type="entry name" value="TRNA DIMETHYLALLYLTRANSFERASE"/>
    <property type="match status" value="1"/>
</dbReference>
<dbReference type="PANTHER" id="PTHR11088:SF60">
    <property type="entry name" value="TRNA DIMETHYLALLYLTRANSFERASE"/>
    <property type="match status" value="1"/>
</dbReference>
<dbReference type="Pfam" id="PF01715">
    <property type="entry name" value="IPPT"/>
    <property type="match status" value="1"/>
</dbReference>
<dbReference type="SUPFAM" id="SSF52540">
    <property type="entry name" value="P-loop containing nucleoside triphosphate hydrolases"/>
    <property type="match status" value="1"/>
</dbReference>
<protein>
    <recommendedName>
        <fullName evidence="1">tRNA dimethylallyltransferase</fullName>
        <ecNumber evidence="1">2.5.1.75</ecNumber>
    </recommendedName>
    <alternativeName>
        <fullName evidence="1">Dimethylallyl diphosphate:tRNA dimethylallyltransferase</fullName>
        <shortName evidence="1">DMAPP:tRNA dimethylallyltransferase</shortName>
        <shortName evidence="1">DMATase</shortName>
    </alternativeName>
    <alternativeName>
        <fullName evidence="1">Isopentenyl-diphosphate:tRNA isopentenyltransferase</fullName>
        <shortName evidence="1">IPP transferase</shortName>
        <shortName evidence="1">IPPT</shortName>
        <shortName evidence="1">IPTase</shortName>
    </alternativeName>
</protein>
<reference key="1">
    <citation type="journal article" date="2009" name="PLoS Pathog.">
        <title>Genomic evidence for the evolution of Streptococcus equi: host restriction, increased virulence, and genetic exchange with human pathogens.</title>
        <authorList>
            <person name="Holden M.T.G."/>
            <person name="Heather Z."/>
            <person name="Paillot R."/>
            <person name="Steward K.F."/>
            <person name="Webb K."/>
            <person name="Ainslie F."/>
            <person name="Jourdan T."/>
            <person name="Bason N.C."/>
            <person name="Holroyd N.E."/>
            <person name="Mungall K."/>
            <person name="Quail M.A."/>
            <person name="Sanders M."/>
            <person name="Simmonds M."/>
            <person name="Willey D."/>
            <person name="Brooks K."/>
            <person name="Aanensen D.M."/>
            <person name="Spratt B.G."/>
            <person name="Jolley K.A."/>
            <person name="Maiden M.C.J."/>
            <person name="Kehoe M."/>
            <person name="Chanter N."/>
            <person name="Bentley S.D."/>
            <person name="Robinson C."/>
            <person name="Maskell D.J."/>
            <person name="Parkhill J."/>
            <person name="Waller A.S."/>
        </authorList>
    </citation>
    <scope>NUCLEOTIDE SEQUENCE [LARGE SCALE GENOMIC DNA]</scope>
    <source>
        <strain>H70</strain>
    </source>
</reference>
<feature type="chain" id="PRO_1000203943" description="tRNA dimethylallyltransferase">
    <location>
        <begin position="1"/>
        <end position="296"/>
    </location>
</feature>
<feature type="region of interest" description="Interaction with substrate tRNA" evidence="1">
    <location>
        <begin position="36"/>
        <end position="39"/>
    </location>
</feature>
<feature type="binding site" evidence="1">
    <location>
        <begin position="11"/>
        <end position="18"/>
    </location>
    <ligand>
        <name>ATP</name>
        <dbReference type="ChEBI" id="CHEBI:30616"/>
    </ligand>
</feature>
<feature type="binding site" evidence="1">
    <location>
        <begin position="13"/>
        <end position="18"/>
    </location>
    <ligand>
        <name>substrate</name>
    </ligand>
</feature>
<feature type="site" description="Interaction with substrate tRNA" evidence="1">
    <location>
        <position position="102"/>
    </location>
</feature>
<feature type="site" description="Interaction with substrate tRNA" evidence="1">
    <location>
        <position position="128"/>
    </location>
</feature>
<gene>
    <name evidence="1" type="primary">miaA</name>
    <name type="ordered locus">SZO_07130</name>
</gene>
<comment type="function">
    <text evidence="1">Catalyzes the transfer of a dimethylallyl group onto the adenine at position 37 in tRNAs that read codons beginning with uridine, leading to the formation of N6-(dimethylallyl)adenosine (i(6)A).</text>
</comment>
<comment type="catalytic activity">
    <reaction evidence="1">
        <text>adenosine(37) in tRNA + dimethylallyl diphosphate = N(6)-dimethylallyladenosine(37) in tRNA + diphosphate</text>
        <dbReference type="Rhea" id="RHEA:26482"/>
        <dbReference type="Rhea" id="RHEA-COMP:10162"/>
        <dbReference type="Rhea" id="RHEA-COMP:10375"/>
        <dbReference type="ChEBI" id="CHEBI:33019"/>
        <dbReference type="ChEBI" id="CHEBI:57623"/>
        <dbReference type="ChEBI" id="CHEBI:74411"/>
        <dbReference type="ChEBI" id="CHEBI:74415"/>
        <dbReference type="EC" id="2.5.1.75"/>
    </reaction>
</comment>
<comment type="cofactor">
    <cofactor evidence="1">
        <name>Mg(2+)</name>
        <dbReference type="ChEBI" id="CHEBI:18420"/>
    </cofactor>
</comment>
<comment type="subunit">
    <text evidence="1">Monomer.</text>
</comment>
<comment type="similarity">
    <text evidence="1">Belongs to the IPP transferase family.</text>
</comment>
<accession>C0MDJ6</accession>
<sequence>MTKEKIIVIVGPTAVGKTALGIALAGAFNGEIISGDSQQVYRHLDIGTAKASAREQALAVHHLIDIREVTESYSAFDFVQDAKRAIEDIVSRGKLPIIVGGTGLYLQSLLEGYHLGGDLDQKELLAYRQQLETLTDTELYQLLASKGIHLDQVNRRRAIRSLELNQFARDLKNQEAPYNPLMIGLTDEREVIYERINKRVDLMMASGLLEEARWLFEQYPAVQASRGIGYKELFPYFQGQASLEEATATLKQQTRRFAKRQLTWFRNRMAVRFDSISESSYPQAIYDRVERFLKEP</sequence>
<evidence type="ECO:0000255" key="1">
    <source>
        <dbReference type="HAMAP-Rule" id="MF_00185"/>
    </source>
</evidence>
<name>MIAA_STRS7</name>